<accession>Q67Z93</accession>
<accession>O65274</accession>
<accession>Q9FDW0</accession>
<proteinExistence type="evidence at transcript level"/>
<dbReference type="EMBL" id="AF058919">
    <property type="protein sequence ID" value="AAC13626.1"/>
    <property type="status" value="ALT_SEQ"/>
    <property type="molecule type" value="Genomic_DNA"/>
</dbReference>
<dbReference type="EMBL" id="AL161472">
    <property type="protein sequence ID" value="CAB80874.1"/>
    <property type="status" value="ALT_SEQ"/>
    <property type="molecule type" value="Genomic_DNA"/>
</dbReference>
<dbReference type="EMBL" id="CP002687">
    <property type="protein sequence ID" value="AEE81913.1"/>
    <property type="molecule type" value="Genomic_DNA"/>
</dbReference>
<dbReference type="EMBL" id="AK176173">
    <property type="protein sequence ID" value="BAD43936.1"/>
    <property type="molecule type" value="mRNA"/>
</dbReference>
<dbReference type="EMBL" id="AK176225">
    <property type="protein sequence ID" value="BAD43988.1"/>
    <property type="molecule type" value="mRNA"/>
</dbReference>
<dbReference type="RefSeq" id="NP_567181.2">
    <property type="nucleotide sequence ID" value="NM_116290.4"/>
</dbReference>
<dbReference type="SMR" id="Q67Z93"/>
<dbReference type="BioGRID" id="13335">
    <property type="interactions" value="11"/>
</dbReference>
<dbReference type="FunCoup" id="Q67Z93">
    <property type="interactions" value="17"/>
</dbReference>
<dbReference type="STRING" id="3702.Q67Z93"/>
<dbReference type="PaxDb" id="3702-AT4G00650.1"/>
<dbReference type="EnsemblPlants" id="AT4G00650.1">
    <property type="protein sequence ID" value="AT4G00650.1"/>
    <property type="gene ID" value="AT4G00650"/>
</dbReference>
<dbReference type="GeneID" id="828044"/>
<dbReference type="Gramene" id="AT4G00650.1">
    <property type="protein sequence ID" value="AT4G00650.1"/>
    <property type="gene ID" value="AT4G00650"/>
</dbReference>
<dbReference type="KEGG" id="ath:AT4G00650"/>
<dbReference type="Araport" id="AT4G00650"/>
<dbReference type="TAIR" id="AT4G00650">
    <property type="gene designation" value="FRI"/>
</dbReference>
<dbReference type="eggNOG" id="ENOG502QUHP">
    <property type="taxonomic scope" value="Eukaryota"/>
</dbReference>
<dbReference type="HOGENOM" id="CLU_064590_0_0_1"/>
<dbReference type="InParanoid" id="Q67Z93"/>
<dbReference type="OMA" id="ADFLDQW"/>
<dbReference type="PRO" id="PR:Q67Z93"/>
<dbReference type="Proteomes" id="UP000006548">
    <property type="component" value="Chromosome 4"/>
</dbReference>
<dbReference type="ExpressionAtlas" id="Q67Z93">
    <property type="expression patterns" value="baseline and differential"/>
</dbReference>
<dbReference type="GO" id="GO:0005634">
    <property type="term" value="C:nucleus"/>
    <property type="evidence" value="ECO:0000314"/>
    <property type="project" value="TAIR"/>
</dbReference>
<dbReference type="GO" id="GO:0046982">
    <property type="term" value="F:protein heterodimerization activity"/>
    <property type="evidence" value="ECO:0000353"/>
    <property type="project" value="TAIR"/>
</dbReference>
<dbReference type="GO" id="GO:0042803">
    <property type="term" value="F:protein homodimerization activity"/>
    <property type="evidence" value="ECO:0000353"/>
    <property type="project" value="TAIR"/>
</dbReference>
<dbReference type="GO" id="GO:0030154">
    <property type="term" value="P:cell differentiation"/>
    <property type="evidence" value="ECO:0007669"/>
    <property type="project" value="UniProtKB-KW"/>
</dbReference>
<dbReference type="GO" id="GO:0009908">
    <property type="term" value="P:flower development"/>
    <property type="evidence" value="ECO:0007669"/>
    <property type="project" value="UniProtKB-KW"/>
</dbReference>
<dbReference type="GO" id="GO:0009910">
    <property type="term" value="P:negative regulation of flower development"/>
    <property type="evidence" value="ECO:0000315"/>
    <property type="project" value="TAIR"/>
</dbReference>
<dbReference type="GO" id="GO:0048510">
    <property type="term" value="P:regulation of timing of transition from vegetative to reproductive phase"/>
    <property type="evidence" value="ECO:0000315"/>
    <property type="project" value="TAIR"/>
</dbReference>
<dbReference type="GO" id="GO:0010321">
    <property type="term" value="P:regulation of vegetative phase change"/>
    <property type="evidence" value="ECO:0000315"/>
    <property type="project" value="TAIR"/>
</dbReference>
<dbReference type="GO" id="GO:0010228">
    <property type="term" value="P:vegetative to reproductive phase transition of meristem"/>
    <property type="evidence" value="ECO:0000315"/>
    <property type="project" value="TAIR"/>
</dbReference>
<dbReference type="InterPro" id="IPR012474">
    <property type="entry name" value="Frigida"/>
</dbReference>
<dbReference type="PANTHER" id="PTHR31791">
    <property type="entry name" value="FRIGIDA-LIKE PROTEIN 3-RELATED"/>
    <property type="match status" value="1"/>
</dbReference>
<dbReference type="PANTHER" id="PTHR31791:SF49">
    <property type="entry name" value="INACTIVE PROTEIN FRIGIDA"/>
    <property type="match status" value="1"/>
</dbReference>
<dbReference type="Pfam" id="PF07899">
    <property type="entry name" value="Frigida"/>
    <property type="match status" value="1"/>
</dbReference>
<gene>
    <name type="primary">FRI</name>
    <name type="ordered locus">At4g00650</name>
    <name type="ORF">F6N23.25</name>
</gene>
<sequence length="314" mass="34973">MSNYPPTVAAQPTTTANPLLQRHQSEQRRRELPKIVETESTSMDITIGQSKQPQFLKSIDELAAFSVAVETFKRQFDDLQKHIESIENAIDSKLESNGVVLAARNNNFHQPMLSPPRNNVSVETTVTVSQPSQEIVPETSNKPEGERICELMCSKGLRKYIYANISDQAKLMEEIPSALKLAKEPAKFVLDCIGKFYLQGRRAFTKESPMSSARQVSLLILESFLLMPDRGKGKVKIESWIKDEAETAAVAWRKRLMTEGGLAAAEKMDARGLLLLVACFGVPSNFRSTDLLDLIRMSGSNEIAGALKRSQFQV</sequence>
<evidence type="ECO:0000255" key="1"/>
<evidence type="ECO:0000256" key="2">
    <source>
        <dbReference type="SAM" id="MobiDB-lite"/>
    </source>
</evidence>
<evidence type="ECO:0000305" key="3"/>
<protein>
    <recommendedName>
        <fullName>Inactive protein FRIGIDA</fullName>
    </recommendedName>
</protein>
<feature type="chain" id="PRO_0000415341" description="Inactive protein FRIGIDA">
    <location>
        <begin position="1"/>
        <end position="314"/>
    </location>
</feature>
<feature type="region of interest" description="Disordered" evidence="2">
    <location>
        <begin position="1"/>
        <end position="31"/>
    </location>
</feature>
<feature type="coiled-coil region" evidence="1">
    <location>
        <begin position="67"/>
        <end position="97"/>
    </location>
</feature>
<feature type="compositionally biased region" description="Low complexity" evidence="2">
    <location>
        <begin position="1"/>
        <end position="18"/>
    </location>
</feature>
<comment type="subcellular location">
    <subcellularLocation>
        <location evidence="3">Nucleus</location>
    </subcellularLocation>
</comment>
<comment type="similarity">
    <text evidence="3">Belongs to the Frigida family.</text>
</comment>
<comment type="caution">
    <text evidence="3">In strain cv. Columbia, cv. Landsberg Erecta and cv. Wassilewskija, loss-of-function mutations lead to inactive FRI protein. A complete sequence for FRI can be found in strains cv. H51 (AC P0DH90).</text>
</comment>
<comment type="sequence caution" evidence="3">
    <conflict type="erroneous gene model prediction">
        <sequence resource="EMBL-CDS" id="AAC13626"/>
    </conflict>
    <text>In cv. Columbia, the gene is defective and the CDS could not be predicted correctly.</text>
</comment>
<comment type="sequence caution" evidence="3">
    <conflict type="erroneous gene model prediction">
        <sequence resource="EMBL-CDS" id="CAB80874"/>
    </conflict>
    <text>In cv. Columbia, the gene is defective and the CDS could not be predicted correctly.</text>
</comment>
<organism>
    <name type="scientific">Arabidopsis thaliana</name>
    <name type="common">Mouse-ear cress</name>
    <dbReference type="NCBI Taxonomy" id="3702"/>
    <lineage>
        <taxon>Eukaryota</taxon>
        <taxon>Viridiplantae</taxon>
        <taxon>Streptophyta</taxon>
        <taxon>Embryophyta</taxon>
        <taxon>Tracheophyta</taxon>
        <taxon>Spermatophyta</taxon>
        <taxon>Magnoliopsida</taxon>
        <taxon>eudicotyledons</taxon>
        <taxon>Gunneridae</taxon>
        <taxon>Pentapetalae</taxon>
        <taxon>rosids</taxon>
        <taxon>malvids</taxon>
        <taxon>Brassicales</taxon>
        <taxon>Brassicaceae</taxon>
        <taxon>Camelineae</taxon>
        <taxon>Arabidopsis</taxon>
    </lineage>
</organism>
<keyword id="KW-0175">Coiled coil</keyword>
<keyword id="KW-0217">Developmental protein</keyword>
<keyword id="KW-0221">Differentiation</keyword>
<keyword id="KW-0287">Flowering</keyword>
<keyword id="KW-0539">Nucleus</keyword>
<keyword id="KW-1185">Reference proteome</keyword>
<name>FRIG0_ARATH</name>
<reference key="1">
    <citation type="journal article" date="1999" name="Nature">
        <title>Sequence and analysis of chromosome 4 of the plant Arabidopsis thaliana.</title>
        <authorList>
            <person name="Mayer K.F.X."/>
            <person name="Schueller C."/>
            <person name="Wambutt R."/>
            <person name="Murphy G."/>
            <person name="Volckaert G."/>
            <person name="Pohl T."/>
            <person name="Duesterhoeft A."/>
            <person name="Stiekema W."/>
            <person name="Entian K.-D."/>
            <person name="Terryn N."/>
            <person name="Harris B."/>
            <person name="Ansorge W."/>
            <person name="Brandt P."/>
            <person name="Grivell L.A."/>
            <person name="Rieger M."/>
            <person name="Weichselgartner M."/>
            <person name="de Simone V."/>
            <person name="Obermaier B."/>
            <person name="Mache R."/>
            <person name="Mueller M."/>
            <person name="Kreis M."/>
            <person name="Delseny M."/>
            <person name="Puigdomenech P."/>
            <person name="Watson M."/>
            <person name="Schmidtheini T."/>
            <person name="Reichert B."/>
            <person name="Portetelle D."/>
            <person name="Perez-Alonso M."/>
            <person name="Boutry M."/>
            <person name="Bancroft I."/>
            <person name="Vos P."/>
            <person name="Hoheisel J."/>
            <person name="Zimmermann W."/>
            <person name="Wedler H."/>
            <person name="Ridley P."/>
            <person name="Langham S.-A."/>
            <person name="McCullagh B."/>
            <person name="Bilham L."/>
            <person name="Robben J."/>
            <person name="van der Schueren J."/>
            <person name="Grymonprez B."/>
            <person name="Chuang Y.-J."/>
            <person name="Vandenbussche F."/>
            <person name="Braeken M."/>
            <person name="Weltjens I."/>
            <person name="Voet M."/>
            <person name="Bastiaens I."/>
            <person name="Aert R."/>
            <person name="Defoor E."/>
            <person name="Weitzenegger T."/>
            <person name="Bothe G."/>
            <person name="Ramsperger U."/>
            <person name="Hilbert H."/>
            <person name="Braun M."/>
            <person name="Holzer E."/>
            <person name="Brandt A."/>
            <person name="Peters S."/>
            <person name="van Staveren M."/>
            <person name="Dirkse W."/>
            <person name="Mooijman P."/>
            <person name="Klein Lankhorst R."/>
            <person name="Rose M."/>
            <person name="Hauf J."/>
            <person name="Koetter P."/>
            <person name="Berneiser S."/>
            <person name="Hempel S."/>
            <person name="Feldpausch M."/>
            <person name="Lamberth S."/>
            <person name="Van den Daele H."/>
            <person name="De Keyser A."/>
            <person name="Buysshaert C."/>
            <person name="Gielen J."/>
            <person name="Villarroel R."/>
            <person name="De Clercq R."/>
            <person name="van Montagu M."/>
            <person name="Rogers J."/>
            <person name="Cronin A."/>
            <person name="Quail M.A."/>
            <person name="Bray-Allen S."/>
            <person name="Clark L."/>
            <person name="Doggett J."/>
            <person name="Hall S."/>
            <person name="Kay M."/>
            <person name="Lennard N."/>
            <person name="McLay K."/>
            <person name="Mayes R."/>
            <person name="Pettett A."/>
            <person name="Rajandream M.A."/>
            <person name="Lyne M."/>
            <person name="Benes V."/>
            <person name="Rechmann S."/>
            <person name="Borkova D."/>
            <person name="Bloecker H."/>
            <person name="Scharfe M."/>
            <person name="Grimm M."/>
            <person name="Loehnert T.-H."/>
            <person name="Dose S."/>
            <person name="de Haan M."/>
            <person name="Maarse A.C."/>
            <person name="Schaefer M."/>
            <person name="Mueller-Auer S."/>
            <person name="Gabel C."/>
            <person name="Fuchs M."/>
            <person name="Fartmann B."/>
            <person name="Granderath K."/>
            <person name="Dauner D."/>
            <person name="Herzl A."/>
            <person name="Neumann S."/>
            <person name="Argiriou A."/>
            <person name="Vitale D."/>
            <person name="Liguori R."/>
            <person name="Piravandi E."/>
            <person name="Massenet O."/>
            <person name="Quigley F."/>
            <person name="Clabauld G."/>
            <person name="Muendlein A."/>
            <person name="Felber R."/>
            <person name="Schnabl S."/>
            <person name="Hiller R."/>
            <person name="Schmidt W."/>
            <person name="Lecharny A."/>
            <person name="Aubourg S."/>
            <person name="Chefdor F."/>
            <person name="Cooke R."/>
            <person name="Berger C."/>
            <person name="Monfort A."/>
            <person name="Casacuberta E."/>
            <person name="Gibbons T."/>
            <person name="Weber N."/>
            <person name="Vandenbol M."/>
            <person name="Bargues M."/>
            <person name="Terol J."/>
            <person name="Torres A."/>
            <person name="Perez-Perez A."/>
            <person name="Purnelle B."/>
            <person name="Bent E."/>
            <person name="Johnson S."/>
            <person name="Tacon D."/>
            <person name="Jesse T."/>
            <person name="Heijnen L."/>
            <person name="Schwarz S."/>
            <person name="Scholler P."/>
            <person name="Heber S."/>
            <person name="Francs P."/>
            <person name="Bielke C."/>
            <person name="Frishman D."/>
            <person name="Haase D."/>
            <person name="Lemcke K."/>
            <person name="Mewes H.-W."/>
            <person name="Stocker S."/>
            <person name="Zaccaria P."/>
            <person name="Bevan M."/>
            <person name="Wilson R.K."/>
            <person name="de la Bastide M."/>
            <person name="Habermann K."/>
            <person name="Parnell L."/>
            <person name="Dedhia N."/>
            <person name="Gnoj L."/>
            <person name="Schutz K."/>
            <person name="Huang E."/>
            <person name="Spiegel L."/>
            <person name="Sekhon M."/>
            <person name="Murray J."/>
            <person name="Sheet P."/>
            <person name="Cordes M."/>
            <person name="Abu-Threideh J."/>
            <person name="Stoneking T."/>
            <person name="Kalicki J."/>
            <person name="Graves T."/>
            <person name="Harmon G."/>
            <person name="Edwards J."/>
            <person name="Latreille P."/>
            <person name="Courtney L."/>
            <person name="Cloud J."/>
            <person name="Abbott A."/>
            <person name="Scott K."/>
            <person name="Johnson D."/>
            <person name="Minx P."/>
            <person name="Bentley D."/>
            <person name="Fulton B."/>
            <person name="Miller N."/>
            <person name="Greco T."/>
            <person name="Kemp K."/>
            <person name="Kramer J."/>
            <person name="Fulton L."/>
            <person name="Mardis E."/>
            <person name="Dante M."/>
            <person name="Pepin K."/>
            <person name="Hillier L.W."/>
            <person name="Nelson J."/>
            <person name="Spieth J."/>
            <person name="Ryan E."/>
            <person name="Andrews S."/>
            <person name="Geisel C."/>
            <person name="Layman D."/>
            <person name="Du H."/>
            <person name="Ali J."/>
            <person name="Berghoff A."/>
            <person name="Jones K."/>
            <person name="Drone K."/>
            <person name="Cotton M."/>
            <person name="Joshu C."/>
            <person name="Antonoiu B."/>
            <person name="Zidanic M."/>
            <person name="Strong C."/>
            <person name="Sun H."/>
            <person name="Lamar B."/>
            <person name="Yordan C."/>
            <person name="Ma P."/>
            <person name="Zhong J."/>
            <person name="Preston R."/>
            <person name="Vil D."/>
            <person name="Shekher M."/>
            <person name="Matero A."/>
            <person name="Shah R."/>
            <person name="Swaby I.K."/>
            <person name="O'Shaughnessy A."/>
            <person name="Rodriguez M."/>
            <person name="Hoffman J."/>
            <person name="Till S."/>
            <person name="Granat S."/>
            <person name="Shohdy N."/>
            <person name="Hasegawa A."/>
            <person name="Hameed A."/>
            <person name="Lodhi M."/>
            <person name="Johnson A."/>
            <person name="Chen E."/>
            <person name="Marra M.A."/>
            <person name="Martienssen R."/>
            <person name="McCombie W.R."/>
        </authorList>
    </citation>
    <scope>NUCLEOTIDE SEQUENCE [LARGE SCALE GENOMIC DNA]</scope>
    <source>
        <strain>cv. Columbia</strain>
    </source>
</reference>
<reference key="2">
    <citation type="journal article" date="2017" name="Plant J.">
        <title>Araport11: a complete reannotation of the Arabidopsis thaliana reference genome.</title>
        <authorList>
            <person name="Cheng C.Y."/>
            <person name="Krishnakumar V."/>
            <person name="Chan A.P."/>
            <person name="Thibaud-Nissen F."/>
            <person name="Schobel S."/>
            <person name="Town C.D."/>
        </authorList>
    </citation>
    <scope>GENOME REANNOTATION</scope>
    <source>
        <strain>cv. Columbia</strain>
    </source>
</reference>
<reference key="3">
    <citation type="submission" date="2004-09" db="EMBL/GenBank/DDBJ databases">
        <title>Large-scale analysis of RIKEN Arabidopsis full-length (RAFL) cDNAs.</title>
        <authorList>
            <person name="Totoki Y."/>
            <person name="Seki M."/>
            <person name="Ishida J."/>
            <person name="Nakajima M."/>
            <person name="Enju A."/>
            <person name="Kamiya A."/>
            <person name="Narusaka M."/>
            <person name="Shin-i T."/>
            <person name="Nakagawa M."/>
            <person name="Sakamoto N."/>
            <person name="Oishi K."/>
            <person name="Kohara Y."/>
            <person name="Kobayashi M."/>
            <person name="Toyoda A."/>
            <person name="Sakaki Y."/>
            <person name="Sakurai T."/>
            <person name="Iida K."/>
            <person name="Akiyama K."/>
            <person name="Satou M."/>
            <person name="Toyoda T."/>
            <person name="Konagaya A."/>
            <person name="Carninci P."/>
            <person name="Kawai J."/>
            <person name="Hayashizaki Y."/>
            <person name="Shinozaki K."/>
        </authorList>
    </citation>
    <scope>NUCLEOTIDE SEQUENCE [LARGE SCALE MRNA]</scope>
    <source>
        <strain>cv. Columbia</strain>
    </source>
</reference>